<comment type="function">
    <text evidence="2">Structural component of the virion that acts as a cement protein on the capsid exterior and forms triskelion structures consisting of three molecules that stabilize three hexon trimers at the center of each icosahedral facet and fixes the peripentonal hexons. Dispensable for assembly. During virus entry, recruits the anterograde motor kinesin-1 to the capsid docked at the nuclear pore complex thereby subjecting the docked capsid to a pulling force. The resulting tension leads to capsid disruption, dispersion of capsid fragments toward cell periphery and eventually viral DNA entry into the host nucleus.</text>
</comment>
<comment type="subunit">
    <text evidence="2">Homotrimer. Interacts with hexon protein; this interaction tethers the hexons together. Self-interacts with adjacent proteins. Interacts with kinesin light chain KLC1; this interaction leads to capsid disruption at the nuclear pore complex during virus entry into host cell.</text>
</comment>
<comment type="subcellular location">
    <subcellularLocation>
        <location evidence="2">Virion</location>
    </subcellularLocation>
    <subcellularLocation>
        <location evidence="2">Host nucleus</location>
    </subcellularLocation>
    <text evidence="2">Located in the canyons between the hexons on the outer surface of the capsid. Forms a sort of hairnet on the outer side of the virion. Present in 240 copies per virion.</text>
</comment>
<comment type="induction">
    <text evidence="2">Expressed in the intermediate phase of the viral replicative cycle.</text>
</comment>
<comment type="domain">
    <text evidence="2">Three N-terminal domains of hexon-interlacing protein form triskelions between hexon capsomers.</text>
</comment>
<comment type="miscellaneous">
    <text evidence="2">This protein is only encoded by mastadenoviruses, and may therefore play a role in mammals tropism.</text>
</comment>
<comment type="similarity">
    <text evidence="2 3">Belongs to the adenoviridae hexon-interlacing protein family.</text>
</comment>
<name>CAP9_ADE41</name>
<dbReference type="EMBL" id="M87544">
    <property type="protein sequence ID" value="AAA42476.1"/>
    <property type="molecule type" value="Genomic_DNA"/>
</dbReference>
<dbReference type="PIR" id="C40249">
    <property type="entry name" value="SXADF1"/>
</dbReference>
<dbReference type="PDB" id="6YBA">
    <property type="method" value="EM"/>
    <property type="resolution" value="4.00 A"/>
    <property type="chains" value="Q/R/S/T=1-133"/>
</dbReference>
<dbReference type="PDB" id="6Z7N">
    <property type="method" value="EM"/>
    <property type="resolution" value="3.77 A"/>
    <property type="chains" value="P/Q/R/S=1-133"/>
</dbReference>
<dbReference type="PDBsum" id="6YBA"/>
<dbReference type="PDBsum" id="6Z7N"/>
<dbReference type="SMR" id="P32539"/>
<dbReference type="GO" id="GO:0042025">
    <property type="term" value="C:host cell nucleus"/>
    <property type="evidence" value="ECO:0007669"/>
    <property type="project" value="UniProtKB-SubCell"/>
</dbReference>
<dbReference type="GO" id="GO:0098021">
    <property type="term" value="C:viral capsid, decoration"/>
    <property type="evidence" value="ECO:0007669"/>
    <property type="project" value="UniProtKB-UniRule"/>
</dbReference>
<dbReference type="GO" id="GO:0031423">
    <property type="term" value="F:hexon binding"/>
    <property type="evidence" value="ECO:0007669"/>
    <property type="project" value="InterPro"/>
</dbReference>
<dbReference type="GO" id="GO:0046718">
    <property type="term" value="P:symbiont entry into host cell"/>
    <property type="evidence" value="ECO:0007669"/>
    <property type="project" value="UniProtKB-UniRule"/>
</dbReference>
<dbReference type="HAMAP" id="MF_04050">
    <property type="entry name" value="ADV_CAP9"/>
    <property type="match status" value="1"/>
</dbReference>
<dbReference type="InterPro" id="IPR005641">
    <property type="entry name" value="Hexon_assoc_IX"/>
</dbReference>
<dbReference type="Pfam" id="PF03955">
    <property type="entry name" value="Adeno_PIX"/>
    <property type="match status" value="1"/>
</dbReference>
<keyword id="KW-0002">3D-structure</keyword>
<keyword id="KW-1232">Capsid decoration protein</keyword>
<keyword id="KW-0167">Capsid protein</keyword>
<keyword id="KW-0175">Coiled coil</keyword>
<keyword id="KW-1048">Host nucleus</keyword>
<keyword id="KW-0945">Host-virus interaction</keyword>
<keyword id="KW-0946">Virion</keyword>
<keyword id="KW-1160">Virus entry into host cell</keyword>
<proteinExistence type="evidence at protein level"/>
<organismHost>
    <name type="scientific">Homo sapiens</name>
    <name type="common">Human</name>
    <dbReference type="NCBI Taxonomy" id="9606"/>
</organismHost>
<reference key="1">
    <citation type="journal article" date="1992" name="Virology">
        <title>The E1B transcription map of the enteric adenovirus type 41.</title>
        <authorList>
            <person name="Allard A."/>
            <person name="Wadell G."/>
        </authorList>
    </citation>
    <scope>NUCLEOTIDE SEQUENCE [GENOMIC DNA]</scope>
</reference>
<evidence type="ECO:0000255" key="1"/>
<evidence type="ECO:0000255" key="2">
    <source>
        <dbReference type="HAMAP-Rule" id="MF_04050"/>
    </source>
</evidence>
<evidence type="ECO:0000305" key="3"/>
<protein>
    <recommendedName>
        <fullName evidence="2">Hexon-interlacing protein</fullName>
    </recommendedName>
    <alternativeName>
        <fullName evidence="2">Protein IX</fullName>
    </alternativeName>
</protein>
<sequence length="133" mass="13626">MSGSMEGNAVSFKGGVFSPYLTTRLPAWAGVRQNVMGSNVDGRPVAPANSATLTYATVGSSVDTAAAAAASAAASTARGMAADFGLYNQLAASRSLREEDALSVVLTRMEELSQQLQDLFAKVALLNPPANAS</sequence>
<feature type="chain" id="PRO_0000221850" description="Hexon-interlacing protein" evidence="2">
    <location>
        <begin position="1"/>
        <end position="133"/>
    </location>
</feature>
<feature type="coiled-coil region" evidence="1">
    <location>
        <begin position="97"/>
        <end position="127"/>
    </location>
</feature>
<organism>
    <name type="scientific">Human adenovirus F serotype 41</name>
    <name type="common">HAdV-41</name>
    <name type="synonym">Human adenovirus 41</name>
    <dbReference type="NCBI Taxonomy" id="10524"/>
    <lineage>
        <taxon>Viruses</taxon>
        <taxon>Varidnaviria</taxon>
        <taxon>Bamfordvirae</taxon>
        <taxon>Preplasmiviricota</taxon>
        <taxon>Tectiliviricetes</taxon>
        <taxon>Rowavirales</taxon>
        <taxon>Adenoviridae</taxon>
        <taxon>Mastadenovirus</taxon>
        <taxon>Human mastadenovirus F</taxon>
    </lineage>
</organism>
<accession>P32539</accession>
<gene>
    <name evidence="2" type="primary">IX</name>
</gene>